<dbReference type="EC" id="6.3.5.-" evidence="1"/>
<dbReference type="EMBL" id="L77117">
    <property type="protein sequence ID" value="AAB97995.1"/>
    <property type="molecule type" value="Genomic_DNA"/>
</dbReference>
<dbReference type="PIR" id="C64302">
    <property type="entry name" value="C64302"/>
</dbReference>
<dbReference type="RefSeq" id="WP_010869511.1">
    <property type="nucleotide sequence ID" value="NC_000909.1"/>
</dbReference>
<dbReference type="SMR" id="Q60325"/>
<dbReference type="FunCoup" id="Q60325">
    <property type="interactions" value="28"/>
</dbReference>
<dbReference type="STRING" id="243232.MJ_0019"/>
<dbReference type="PaxDb" id="243232-MJ_0019"/>
<dbReference type="EnsemblBacteria" id="AAB97995">
    <property type="protein sequence ID" value="AAB97995"/>
    <property type="gene ID" value="MJ_0019"/>
</dbReference>
<dbReference type="GeneID" id="1450857"/>
<dbReference type="KEGG" id="mja:MJ_0019"/>
<dbReference type="eggNOG" id="arCOG01719">
    <property type="taxonomic scope" value="Archaea"/>
</dbReference>
<dbReference type="HOGENOM" id="CLU_030702_0_0_2"/>
<dbReference type="InParanoid" id="Q60325"/>
<dbReference type="OrthoDB" id="7316at2157"/>
<dbReference type="PhylomeDB" id="Q60325"/>
<dbReference type="Proteomes" id="UP000000805">
    <property type="component" value="Chromosome"/>
</dbReference>
<dbReference type="GO" id="GO:0005737">
    <property type="term" value="C:cytoplasm"/>
    <property type="evidence" value="ECO:0007669"/>
    <property type="project" value="InterPro"/>
</dbReference>
<dbReference type="GO" id="GO:0004812">
    <property type="term" value="F:aminoacyl-tRNA ligase activity"/>
    <property type="evidence" value="ECO:0007669"/>
    <property type="project" value="InterPro"/>
</dbReference>
<dbReference type="GO" id="GO:0005524">
    <property type="term" value="F:ATP binding"/>
    <property type="evidence" value="ECO:0007669"/>
    <property type="project" value="UniProtKB-KW"/>
</dbReference>
<dbReference type="GO" id="GO:0050567">
    <property type="term" value="F:glutaminyl-tRNA synthase (glutamine-hydrolyzing) activity"/>
    <property type="evidence" value="ECO:0000318"/>
    <property type="project" value="GO_Central"/>
</dbReference>
<dbReference type="GO" id="GO:0070681">
    <property type="term" value="P:glutaminyl-tRNAGln biosynthesis via transamidation"/>
    <property type="evidence" value="ECO:0000318"/>
    <property type="project" value="GO_Central"/>
</dbReference>
<dbReference type="GO" id="GO:0006412">
    <property type="term" value="P:translation"/>
    <property type="evidence" value="ECO:0007669"/>
    <property type="project" value="UniProtKB-UniRule"/>
</dbReference>
<dbReference type="FunFam" id="1.10.10.410:FF:000003">
    <property type="entry name" value="Glutamyl-tRNA(Gln) amidotransferase subunit E"/>
    <property type="match status" value="1"/>
</dbReference>
<dbReference type="FunFam" id="1.10.150.380:FF:000002">
    <property type="entry name" value="Glutamyl-tRNA(Gln) amidotransferase subunit E"/>
    <property type="match status" value="1"/>
</dbReference>
<dbReference type="FunFam" id="3.30.1360.30:FF:000003">
    <property type="entry name" value="Glutamyl-tRNA(Gln) amidotransferase subunit E"/>
    <property type="match status" value="1"/>
</dbReference>
<dbReference type="Gene3D" id="1.10.10.410">
    <property type="match status" value="1"/>
</dbReference>
<dbReference type="Gene3D" id="3.30.1360.30">
    <property type="entry name" value="GAD-like domain"/>
    <property type="match status" value="1"/>
</dbReference>
<dbReference type="Gene3D" id="1.10.150.380">
    <property type="entry name" value="GatB domain, N-terminal subdomain"/>
    <property type="match status" value="1"/>
</dbReference>
<dbReference type="HAMAP" id="MF_00588">
    <property type="entry name" value="GatE"/>
    <property type="match status" value="1"/>
</dbReference>
<dbReference type="InterPro" id="IPR017959">
    <property type="entry name" value="Asn/Gln-tRNA_amidoTrfase_suB/E"/>
</dbReference>
<dbReference type="InterPro" id="IPR006075">
    <property type="entry name" value="Asn/Gln-tRNA_Trfase_suB/E_cat"/>
</dbReference>
<dbReference type="InterPro" id="IPR018027">
    <property type="entry name" value="Asn/Gln_amidotransferase"/>
</dbReference>
<dbReference type="InterPro" id="IPR003789">
    <property type="entry name" value="Asn/Gln_tRNA_amidoTrase-B-like"/>
</dbReference>
<dbReference type="InterPro" id="IPR004115">
    <property type="entry name" value="GAD-like_sf"/>
</dbReference>
<dbReference type="InterPro" id="IPR029351">
    <property type="entry name" value="GAD_dom"/>
</dbReference>
<dbReference type="InterPro" id="IPR042114">
    <property type="entry name" value="GatB_C_1"/>
</dbReference>
<dbReference type="InterPro" id="IPR023168">
    <property type="entry name" value="GatB_Yqey_C_2"/>
</dbReference>
<dbReference type="InterPro" id="IPR004414">
    <property type="entry name" value="GatE"/>
</dbReference>
<dbReference type="InterPro" id="IPR017958">
    <property type="entry name" value="Gln-tRNA_amidoTrfase_suB_CS"/>
</dbReference>
<dbReference type="InterPro" id="IPR014746">
    <property type="entry name" value="Gln_synth/guanido_kin_cat_dom"/>
</dbReference>
<dbReference type="NCBIfam" id="TIGR00134">
    <property type="entry name" value="gatE_arch"/>
    <property type="match status" value="1"/>
</dbReference>
<dbReference type="NCBIfam" id="NF003107">
    <property type="entry name" value="PRK04028.1"/>
    <property type="match status" value="1"/>
</dbReference>
<dbReference type="PANTHER" id="PTHR11659">
    <property type="entry name" value="GLUTAMYL-TRNA GLN AMIDOTRANSFERASE SUBUNIT B MITOCHONDRIAL AND PROKARYOTIC PET112-RELATED"/>
    <property type="match status" value="1"/>
</dbReference>
<dbReference type="PANTHER" id="PTHR11659:SF2">
    <property type="entry name" value="GLUTAMYL-TRNA(GLN) AMIDOTRANSFERASE SUBUNIT E"/>
    <property type="match status" value="1"/>
</dbReference>
<dbReference type="Pfam" id="PF02938">
    <property type="entry name" value="GAD"/>
    <property type="match status" value="1"/>
</dbReference>
<dbReference type="Pfam" id="PF02934">
    <property type="entry name" value="GatB_N"/>
    <property type="match status" value="1"/>
</dbReference>
<dbReference type="Pfam" id="PF02637">
    <property type="entry name" value="GatB_Yqey"/>
    <property type="match status" value="1"/>
</dbReference>
<dbReference type="SMART" id="SM00845">
    <property type="entry name" value="GatB_Yqey"/>
    <property type="match status" value="1"/>
</dbReference>
<dbReference type="SUPFAM" id="SSF55261">
    <property type="entry name" value="GAD domain-like"/>
    <property type="match status" value="1"/>
</dbReference>
<dbReference type="SUPFAM" id="SSF89095">
    <property type="entry name" value="GatB/YqeY motif"/>
    <property type="match status" value="1"/>
</dbReference>
<dbReference type="SUPFAM" id="SSF55931">
    <property type="entry name" value="Glutamine synthetase/guanido kinase"/>
    <property type="match status" value="1"/>
</dbReference>
<dbReference type="PROSITE" id="PS01234">
    <property type="entry name" value="GATB"/>
    <property type="match status" value="1"/>
</dbReference>
<comment type="function">
    <text evidence="1">Allows the formation of correctly charged Gln-tRNA(Gln) through the transamidation of misacylated Glu-tRNA(Gln) in organisms which lack glutaminyl-tRNA synthetase. The reaction takes place in the presence of glutamine and ATP through an activated gamma-phospho-Glu-tRNA(Gln). The GatDE system is specific for glutamate and does not act on aspartate.</text>
</comment>
<comment type="catalytic activity">
    <reaction evidence="1">
        <text>L-glutamyl-tRNA(Gln) + L-glutamine + ATP + H2O = L-glutaminyl-tRNA(Gln) + L-glutamate + ADP + phosphate + H(+)</text>
        <dbReference type="Rhea" id="RHEA:17521"/>
        <dbReference type="Rhea" id="RHEA-COMP:9681"/>
        <dbReference type="Rhea" id="RHEA-COMP:9684"/>
        <dbReference type="ChEBI" id="CHEBI:15377"/>
        <dbReference type="ChEBI" id="CHEBI:15378"/>
        <dbReference type="ChEBI" id="CHEBI:29985"/>
        <dbReference type="ChEBI" id="CHEBI:30616"/>
        <dbReference type="ChEBI" id="CHEBI:43474"/>
        <dbReference type="ChEBI" id="CHEBI:58359"/>
        <dbReference type="ChEBI" id="CHEBI:78520"/>
        <dbReference type="ChEBI" id="CHEBI:78521"/>
        <dbReference type="ChEBI" id="CHEBI:456216"/>
    </reaction>
</comment>
<comment type="subunit">
    <text evidence="1">Heterodimer of GatD and GatE.</text>
</comment>
<comment type="similarity">
    <text evidence="1">Belongs to the GatB/GatE family. GatE subfamily.</text>
</comment>
<proteinExistence type="inferred from homology"/>
<sequence>MEINYEKVGLKVGLEIHQQLNTKRKLFCHCPTILRDDEPDGEIVRVLRPSLSEMGEVDRAALIEARKGKKFIYQFYNDTTCLVELDEEPPHPPSEEALRIALEVALLMNMNVVDVAYTMRKIVIDGSNTSGFQRTIFLARDGYIETSEGKVGITSLCLEEDAARKIEDRGDAVVYNLDRLGIPLVEISTAPDIKTPKMAKEAARRIGEILRATGKVKRGLGTIRQDINISIKDGARIEVKGVQDLDLIEKVVENEVIRQLNLLKIRDELRERNAEVVEKIFDVTEIFKDCKSKIIQNALKKKNGKVKAVLLKGFAGLVGKEIQPGRRLGTEFSDRAKVIAGVGGLFHTDELPKYGITEEEVKKLKEFVNAEENDAVIIVADEESKVDRALEAVIERAKEALIGVPEETRRALEDGNTAYLRPLPGAARMYPETDIPPIIIKKEFIEEIRANLPELPEEKFERFKKEYKLNDELAKKMVLSYYVDLFEDLCKKFKNVKPVLIATTLEGTLKEIKREGYDIDKLEDRHLEETFKALSEGKIAKEGIVEVLKGFCEFPDKSIDEILEIKGLKGLSKEEVEKIIEGIIKEHLNVVKEKGEKAYGFLMGRCMAKLRGKADGKLVNDILRKKLKEI</sequence>
<evidence type="ECO:0000255" key="1">
    <source>
        <dbReference type="HAMAP-Rule" id="MF_00588"/>
    </source>
</evidence>
<protein>
    <recommendedName>
        <fullName evidence="1">Glutamyl-tRNA(Gln) amidotransferase subunit E</fullName>
        <shortName evidence="1">Glu-ADT subunit E</shortName>
        <ecNumber evidence="1">6.3.5.-</ecNumber>
    </recommendedName>
</protein>
<keyword id="KW-0067">ATP-binding</keyword>
<keyword id="KW-0436">Ligase</keyword>
<keyword id="KW-0547">Nucleotide-binding</keyword>
<keyword id="KW-0648">Protein biosynthesis</keyword>
<keyword id="KW-1185">Reference proteome</keyword>
<gene>
    <name evidence="1" type="primary">gatE</name>
    <name type="ordered locus">MJ0019</name>
</gene>
<name>GATE_METJA</name>
<reference key="1">
    <citation type="journal article" date="1996" name="Science">
        <title>Complete genome sequence of the methanogenic archaeon, Methanococcus jannaschii.</title>
        <authorList>
            <person name="Bult C.J."/>
            <person name="White O."/>
            <person name="Olsen G.J."/>
            <person name="Zhou L."/>
            <person name="Fleischmann R.D."/>
            <person name="Sutton G.G."/>
            <person name="Blake J.A."/>
            <person name="FitzGerald L.M."/>
            <person name="Clayton R.A."/>
            <person name="Gocayne J.D."/>
            <person name="Kerlavage A.R."/>
            <person name="Dougherty B.A."/>
            <person name="Tomb J.-F."/>
            <person name="Adams M.D."/>
            <person name="Reich C.I."/>
            <person name="Overbeek R."/>
            <person name="Kirkness E.F."/>
            <person name="Weinstock K.G."/>
            <person name="Merrick J.M."/>
            <person name="Glodek A."/>
            <person name="Scott J.L."/>
            <person name="Geoghagen N.S.M."/>
            <person name="Weidman J.F."/>
            <person name="Fuhrmann J.L."/>
            <person name="Nguyen D."/>
            <person name="Utterback T.R."/>
            <person name="Kelley J.M."/>
            <person name="Peterson J.D."/>
            <person name="Sadow P.W."/>
            <person name="Hanna M.C."/>
            <person name="Cotton M.D."/>
            <person name="Roberts K.M."/>
            <person name="Hurst M.A."/>
            <person name="Kaine B.P."/>
            <person name="Borodovsky M."/>
            <person name="Klenk H.-P."/>
            <person name="Fraser C.M."/>
            <person name="Smith H.O."/>
            <person name="Woese C.R."/>
            <person name="Venter J.C."/>
        </authorList>
    </citation>
    <scope>NUCLEOTIDE SEQUENCE [LARGE SCALE GENOMIC DNA]</scope>
    <source>
        <strain>ATCC 43067 / DSM 2661 / JAL-1 / JCM 10045 / NBRC 100440</strain>
    </source>
</reference>
<feature type="chain" id="PRO_0000140072" description="Glutamyl-tRNA(Gln) amidotransferase subunit E">
    <location>
        <begin position="1"/>
        <end position="630"/>
    </location>
</feature>
<organism>
    <name type="scientific">Methanocaldococcus jannaschii (strain ATCC 43067 / DSM 2661 / JAL-1 / JCM 10045 / NBRC 100440)</name>
    <name type="common">Methanococcus jannaschii</name>
    <dbReference type="NCBI Taxonomy" id="243232"/>
    <lineage>
        <taxon>Archaea</taxon>
        <taxon>Methanobacteriati</taxon>
        <taxon>Methanobacteriota</taxon>
        <taxon>Methanomada group</taxon>
        <taxon>Methanococci</taxon>
        <taxon>Methanococcales</taxon>
        <taxon>Methanocaldococcaceae</taxon>
        <taxon>Methanocaldococcus</taxon>
    </lineage>
</organism>
<accession>Q60325</accession>